<sequence>MKKSKLLISTIISLFVLTASSVNHAQEKDFDPEVAADAVLRSAGIDPDKSVANKAPASGFWTCHGIRMHMGVDMGSWTDLDTGELYTQIETGQIDEQDKDEKIKGTDYLYALTRNPAVIKYFIVDKSGKNLYIRDDVNIFKTYKCKRN</sequence>
<evidence type="ECO:0000255" key="1"/>
<evidence type="ECO:0000305" key="2"/>
<gene>
    <name type="primary">ges</name>
</gene>
<protein>
    <recommendedName>
        <fullName>D108-specific protein</fullName>
    </recommendedName>
    <alternativeName>
        <fullName>12 kDa protein</fullName>
    </alternativeName>
</protein>
<name>GES_BPD10</name>
<feature type="signal peptide" evidence="1">
    <location>
        <begin position="1"/>
        <end position="24"/>
    </location>
</feature>
<feature type="chain" id="PRO_0000077644" description="D108-specific protein">
    <location>
        <begin position="25"/>
        <end position="148"/>
    </location>
</feature>
<feature type="sequence conflict" description="In Ref. 1; CAA29369." evidence="2" ref="1">
    <original>V</original>
    <variation>M</variation>
    <location>
        <position position="34"/>
    </location>
</feature>
<accession>P08795</accession>
<accession>C9DGR5</accession>
<proteinExistence type="inferred from homology"/>
<organism>
    <name type="scientific">Escherichia phage D108</name>
    <name type="common">Bacteriophage D108</name>
    <dbReference type="NCBI Taxonomy" id="665033"/>
    <lineage>
        <taxon>Viruses</taxon>
        <taxon>Duplodnaviria</taxon>
        <taxon>Heunggongvirae</taxon>
        <taxon>Uroviricota</taxon>
        <taxon>Caudoviricetes</taxon>
        <taxon>Muvirus</taxon>
        <taxon>Muvirus mu</taxon>
    </lineage>
</organism>
<reference key="1">
    <citation type="journal article" date="1987" name="Nucleic Acids Res.">
        <title>The right end of transposable bacteriophage D108 contains a 520 base pair protein-encoding sequence not present in bacteriophage Mu.</title>
        <authorList>
            <person name="Szatmari G.B."/>
            <person name="Lapointe M."/>
            <person name="Dubow M.S."/>
        </authorList>
    </citation>
    <scope>NUCLEOTIDE SEQUENCE [GENOMIC DNA]</scope>
</reference>
<reference key="2">
    <citation type="submission" date="2009-07" db="EMBL/GenBank/DDBJ databases">
        <authorList>
            <person name="Kropinski A.M."/>
            <person name="Villegas A."/>
            <person name="Lingohr E.J."/>
        </authorList>
    </citation>
    <scope>NUCLEOTIDE SEQUENCE [GENOMIC DNA]</scope>
</reference>
<comment type="function">
    <text>Probably allows the phage to grow in a different host or environment or alteration of the cell wall or membrane.</text>
</comment>
<comment type="sequence caution" evidence="2">
    <conflict type="erroneous initiation">
        <sequence resource="EMBL-CDS" id="CAA29369"/>
    </conflict>
    <text>Truncated N-terminus.</text>
</comment>
<comment type="sequence caution" evidence="2">
    <conflict type="frameshift">
        <sequence resource="EMBL-CDS" id="CAA29369"/>
    </conflict>
</comment>
<keyword id="KW-0732">Signal</keyword>
<dbReference type="EMBL" id="X05927">
    <property type="protein sequence ID" value="CAA29369.1"/>
    <property type="status" value="ALT_SEQ"/>
    <property type="molecule type" value="Genomic_DNA"/>
</dbReference>
<dbReference type="EMBL" id="GQ357916">
    <property type="protein sequence ID" value="ACV50316.1"/>
    <property type="molecule type" value="Genomic_DNA"/>
</dbReference>
<dbReference type="PIR" id="S07974">
    <property type="entry name" value="S07974"/>
</dbReference>
<dbReference type="KEGG" id="vg:8658868"/>
<dbReference type="Proteomes" id="UP000000320">
    <property type="component" value="Genome"/>
</dbReference>
<organismHost>
    <name type="scientific">Escherichia coli</name>
    <dbReference type="NCBI Taxonomy" id="562"/>
</organismHost>